<accession>Q62GK2</accession>
<gene>
    <name evidence="1" type="primary">fusA2</name>
    <name type="synonym">fusA-2</name>
    <name type="ordered locus">BMA2635</name>
</gene>
<dbReference type="EMBL" id="CP000010">
    <property type="protein sequence ID" value="AAU47873.1"/>
    <property type="molecule type" value="Genomic_DNA"/>
</dbReference>
<dbReference type="RefSeq" id="YP_104169.1">
    <property type="nucleotide sequence ID" value="NC_006348.1"/>
</dbReference>
<dbReference type="SMR" id="Q62GK2"/>
<dbReference type="KEGG" id="bma:BMA2635"/>
<dbReference type="PATRIC" id="fig|243160.12.peg.2706"/>
<dbReference type="eggNOG" id="COG0480">
    <property type="taxonomic scope" value="Bacteria"/>
</dbReference>
<dbReference type="HOGENOM" id="CLU_002794_4_1_4"/>
<dbReference type="Proteomes" id="UP000006693">
    <property type="component" value="Chromosome 1"/>
</dbReference>
<dbReference type="GO" id="GO:0005737">
    <property type="term" value="C:cytoplasm"/>
    <property type="evidence" value="ECO:0007669"/>
    <property type="project" value="UniProtKB-SubCell"/>
</dbReference>
<dbReference type="GO" id="GO:0005525">
    <property type="term" value="F:GTP binding"/>
    <property type="evidence" value="ECO:0007669"/>
    <property type="project" value="UniProtKB-UniRule"/>
</dbReference>
<dbReference type="GO" id="GO:0003924">
    <property type="term" value="F:GTPase activity"/>
    <property type="evidence" value="ECO:0007669"/>
    <property type="project" value="InterPro"/>
</dbReference>
<dbReference type="GO" id="GO:0097216">
    <property type="term" value="F:guanosine tetraphosphate binding"/>
    <property type="evidence" value="ECO:0007669"/>
    <property type="project" value="UniProtKB-ARBA"/>
</dbReference>
<dbReference type="GO" id="GO:0003746">
    <property type="term" value="F:translation elongation factor activity"/>
    <property type="evidence" value="ECO:0007669"/>
    <property type="project" value="UniProtKB-UniRule"/>
</dbReference>
<dbReference type="GO" id="GO:0032790">
    <property type="term" value="P:ribosome disassembly"/>
    <property type="evidence" value="ECO:0007669"/>
    <property type="project" value="TreeGrafter"/>
</dbReference>
<dbReference type="CDD" id="cd01886">
    <property type="entry name" value="EF-G"/>
    <property type="match status" value="1"/>
</dbReference>
<dbReference type="CDD" id="cd16262">
    <property type="entry name" value="EFG_III"/>
    <property type="match status" value="1"/>
</dbReference>
<dbReference type="CDD" id="cd01434">
    <property type="entry name" value="EFG_mtEFG1_IV"/>
    <property type="match status" value="1"/>
</dbReference>
<dbReference type="CDD" id="cd03713">
    <property type="entry name" value="EFG_mtEFG_C"/>
    <property type="match status" value="1"/>
</dbReference>
<dbReference type="CDD" id="cd04088">
    <property type="entry name" value="EFG_mtEFG_II"/>
    <property type="match status" value="1"/>
</dbReference>
<dbReference type="FunFam" id="2.40.30.10:FF:000006">
    <property type="entry name" value="Elongation factor G"/>
    <property type="match status" value="1"/>
</dbReference>
<dbReference type="FunFam" id="3.30.230.10:FF:000003">
    <property type="entry name" value="Elongation factor G"/>
    <property type="match status" value="1"/>
</dbReference>
<dbReference type="FunFam" id="3.30.70.240:FF:000001">
    <property type="entry name" value="Elongation factor G"/>
    <property type="match status" value="1"/>
</dbReference>
<dbReference type="FunFam" id="3.30.70.870:FF:000001">
    <property type="entry name" value="Elongation factor G"/>
    <property type="match status" value="1"/>
</dbReference>
<dbReference type="FunFam" id="3.40.50.300:FF:000029">
    <property type="entry name" value="Elongation factor G"/>
    <property type="match status" value="1"/>
</dbReference>
<dbReference type="Gene3D" id="3.30.230.10">
    <property type="match status" value="1"/>
</dbReference>
<dbReference type="Gene3D" id="3.30.70.240">
    <property type="match status" value="1"/>
</dbReference>
<dbReference type="Gene3D" id="3.30.70.870">
    <property type="entry name" value="Elongation Factor G (Translational Gtpase), domain 3"/>
    <property type="match status" value="1"/>
</dbReference>
<dbReference type="Gene3D" id="3.40.50.300">
    <property type="entry name" value="P-loop containing nucleotide triphosphate hydrolases"/>
    <property type="match status" value="1"/>
</dbReference>
<dbReference type="Gene3D" id="2.40.30.10">
    <property type="entry name" value="Translation factors"/>
    <property type="match status" value="1"/>
</dbReference>
<dbReference type="HAMAP" id="MF_00054_B">
    <property type="entry name" value="EF_G_EF_2_B"/>
    <property type="match status" value="1"/>
</dbReference>
<dbReference type="InterPro" id="IPR041095">
    <property type="entry name" value="EFG_II"/>
</dbReference>
<dbReference type="InterPro" id="IPR009022">
    <property type="entry name" value="EFG_III"/>
</dbReference>
<dbReference type="InterPro" id="IPR035647">
    <property type="entry name" value="EFG_III/V"/>
</dbReference>
<dbReference type="InterPro" id="IPR047872">
    <property type="entry name" value="EFG_IV"/>
</dbReference>
<dbReference type="InterPro" id="IPR035649">
    <property type="entry name" value="EFG_V"/>
</dbReference>
<dbReference type="InterPro" id="IPR000640">
    <property type="entry name" value="EFG_V-like"/>
</dbReference>
<dbReference type="InterPro" id="IPR004161">
    <property type="entry name" value="EFTu-like_2"/>
</dbReference>
<dbReference type="InterPro" id="IPR031157">
    <property type="entry name" value="G_TR_CS"/>
</dbReference>
<dbReference type="InterPro" id="IPR027417">
    <property type="entry name" value="P-loop_NTPase"/>
</dbReference>
<dbReference type="InterPro" id="IPR020568">
    <property type="entry name" value="Ribosomal_Su5_D2-typ_SF"/>
</dbReference>
<dbReference type="InterPro" id="IPR014721">
    <property type="entry name" value="Ribsml_uS5_D2-typ_fold_subgr"/>
</dbReference>
<dbReference type="InterPro" id="IPR005225">
    <property type="entry name" value="Small_GTP-bd"/>
</dbReference>
<dbReference type="InterPro" id="IPR000795">
    <property type="entry name" value="T_Tr_GTP-bd_dom"/>
</dbReference>
<dbReference type="InterPro" id="IPR009000">
    <property type="entry name" value="Transl_B-barrel_sf"/>
</dbReference>
<dbReference type="InterPro" id="IPR004540">
    <property type="entry name" value="Transl_elong_EFG/EF2"/>
</dbReference>
<dbReference type="InterPro" id="IPR005517">
    <property type="entry name" value="Transl_elong_EFG/EF2_IV"/>
</dbReference>
<dbReference type="NCBIfam" id="TIGR00484">
    <property type="entry name" value="EF-G"/>
    <property type="match status" value="1"/>
</dbReference>
<dbReference type="NCBIfam" id="NF009381">
    <property type="entry name" value="PRK12740.1-5"/>
    <property type="match status" value="1"/>
</dbReference>
<dbReference type="NCBIfam" id="TIGR00231">
    <property type="entry name" value="small_GTP"/>
    <property type="match status" value="1"/>
</dbReference>
<dbReference type="PANTHER" id="PTHR43261:SF1">
    <property type="entry name" value="RIBOSOME-RELEASING FACTOR 2, MITOCHONDRIAL"/>
    <property type="match status" value="1"/>
</dbReference>
<dbReference type="PANTHER" id="PTHR43261">
    <property type="entry name" value="TRANSLATION ELONGATION FACTOR G-RELATED"/>
    <property type="match status" value="1"/>
</dbReference>
<dbReference type="Pfam" id="PF00679">
    <property type="entry name" value="EFG_C"/>
    <property type="match status" value="1"/>
</dbReference>
<dbReference type="Pfam" id="PF14492">
    <property type="entry name" value="EFG_III"/>
    <property type="match status" value="1"/>
</dbReference>
<dbReference type="Pfam" id="PF03764">
    <property type="entry name" value="EFG_IV"/>
    <property type="match status" value="1"/>
</dbReference>
<dbReference type="Pfam" id="PF00009">
    <property type="entry name" value="GTP_EFTU"/>
    <property type="match status" value="1"/>
</dbReference>
<dbReference type="Pfam" id="PF03144">
    <property type="entry name" value="GTP_EFTU_D2"/>
    <property type="match status" value="1"/>
</dbReference>
<dbReference type="PRINTS" id="PR00315">
    <property type="entry name" value="ELONGATNFCT"/>
</dbReference>
<dbReference type="SMART" id="SM00838">
    <property type="entry name" value="EFG_C"/>
    <property type="match status" value="1"/>
</dbReference>
<dbReference type="SMART" id="SM00889">
    <property type="entry name" value="EFG_IV"/>
    <property type="match status" value="1"/>
</dbReference>
<dbReference type="SUPFAM" id="SSF54980">
    <property type="entry name" value="EF-G C-terminal domain-like"/>
    <property type="match status" value="2"/>
</dbReference>
<dbReference type="SUPFAM" id="SSF52540">
    <property type="entry name" value="P-loop containing nucleoside triphosphate hydrolases"/>
    <property type="match status" value="1"/>
</dbReference>
<dbReference type="SUPFAM" id="SSF54211">
    <property type="entry name" value="Ribosomal protein S5 domain 2-like"/>
    <property type="match status" value="1"/>
</dbReference>
<dbReference type="SUPFAM" id="SSF50447">
    <property type="entry name" value="Translation proteins"/>
    <property type="match status" value="1"/>
</dbReference>
<dbReference type="PROSITE" id="PS00301">
    <property type="entry name" value="G_TR_1"/>
    <property type="match status" value="1"/>
</dbReference>
<dbReference type="PROSITE" id="PS51722">
    <property type="entry name" value="G_TR_2"/>
    <property type="match status" value="1"/>
</dbReference>
<keyword id="KW-0963">Cytoplasm</keyword>
<keyword id="KW-0251">Elongation factor</keyword>
<keyword id="KW-0342">GTP-binding</keyword>
<keyword id="KW-0547">Nucleotide-binding</keyword>
<keyword id="KW-0648">Protein biosynthesis</keyword>
<keyword id="KW-1185">Reference proteome</keyword>
<sequence length="700" mass="77446">MARKTPIERYRNIGISAHIDAGKTTTTERILFYTGVNHKIGEVHDGAATMDWMEQEQERGITITSAATTAFWKGMGNNYPEHRINIIDTPGHVDFTIEVERSMRVLDGACMVYCAVGGVQPQSETVWRQANKYKVPRLAFVNKMDRTGANFFKVYDQLKLRLKANPVPVVVPIGAEENFKGVVDLLKMKAIIWDEASQGTKFDYVDIPAELADTCQEWREKMVEAAAEASEDLMNKYLEEGDLPEADIVKALRDRTIACEIQPMLCGTAFKNKGVQRMLDAVIDFLPSPVDIPPVKGELESGEAAERQASDEEKFSSLAFKIMTDPFVGQLIFFRVYSGVVNSGDTLLNSTKGKKERLGRILQMHANQREEIKEVRAGDIAAAVGLKEATTGDTLCDPAHPIVLERMVFPEPVISQAVEPKTKADQEKMGLALNRLAQEDPSFRVQTDEESGQTIISGMGELHLEILVDRMKREFGVEATVGKPQVAYRETIRSTAKDVDGKFVKQSGGRGQYGHAVITLEPNEQGKGYEFFDEIKGGVIPREYIPAVDKGIQDTLKSGVLAGFPVVDVKVHLTFGSYHDVDSNENAFRMAGSMAFKEAMRRANPVVLEPMMAVEVETPEDYMGNVMGDLSGRRGIVQGMEDMVGGGKIVRAEVPLSEMFGYSTSLRSLTQGRATYTMEFKHYAEAPKNVADAIISAKSK</sequence>
<organism>
    <name type="scientific">Burkholderia mallei (strain ATCC 23344)</name>
    <dbReference type="NCBI Taxonomy" id="243160"/>
    <lineage>
        <taxon>Bacteria</taxon>
        <taxon>Pseudomonadati</taxon>
        <taxon>Pseudomonadota</taxon>
        <taxon>Betaproteobacteria</taxon>
        <taxon>Burkholderiales</taxon>
        <taxon>Burkholderiaceae</taxon>
        <taxon>Burkholderia</taxon>
        <taxon>pseudomallei group</taxon>
    </lineage>
</organism>
<evidence type="ECO:0000255" key="1">
    <source>
        <dbReference type="HAMAP-Rule" id="MF_00054"/>
    </source>
</evidence>
<name>EFG2_BURMA</name>
<feature type="chain" id="PRO_0000091094" description="Elongation factor G 2">
    <location>
        <begin position="1"/>
        <end position="700"/>
    </location>
</feature>
<feature type="domain" description="tr-type G">
    <location>
        <begin position="8"/>
        <end position="290"/>
    </location>
</feature>
<feature type="binding site" evidence="1">
    <location>
        <begin position="17"/>
        <end position="24"/>
    </location>
    <ligand>
        <name>GTP</name>
        <dbReference type="ChEBI" id="CHEBI:37565"/>
    </ligand>
</feature>
<feature type="binding site" evidence="1">
    <location>
        <begin position="88"/>
        <end position="92"/>
    </location>
    <ligand>
        <name>GTP</name>
        <dbReference type="ChEBI" id="CHEBI:37565"/>
    </ligand>
</feature>
<feature type="binding site" evidence="1">
    <location>
        <begin position="142"/>
        <end position="145"/>
    </location>
    <ligand>
        <name>GTP</name>
        <dbReference type="ChEBI" id="CHEBI:37565"/>
    </ligand>
</feature>
<protein>
    <recommendedName>
        <fullName evidence="1">Elongation factor G 2</fullName>
        <shortName evidence="1">EF-G 2</shortName>
    </recommendedName>
</protein>
<comment type="function">
    <text evidence="1">Catalyzes the GTP-dependent ribosomal translocation step during translation elongation. During this step, the ribosome changes from the pre-translocational (PRE) to the post-translocational (POST) state as the newly formed A-site-bound peptidyl-tRNA and P-site-bound deacylated tRNA move to the P and E sites, respectively. Catalyzes the coordinated movement of the two tRNA molecules, the mRNA and conformational changes in the ribosome.</text>
</comment>
<comment type="subcellular location">
    <subcellularLocation>
        <location evidence="1">Cytoplasm</location>
    </subcellularLocation>
</comment>
<comment type="similarity">
    <text evidence="1">Belongs to the TRAFAC class translation factor GTPase superfamily. Classic translation factor GTPase family. EF-G/EF-2 subfamily.</text>
</comment>
<proteinExistence type="inferred from homology"/>
<reference key="1">
    <citation type="journal article" date="2004" name="Proc. Natl. Acad. Sci. U.S.A.">
        <title>Structural flexibility in the Burkholderia mallei genome.</title>
        <authorList>
            <person name="Nierman W.C."/>
            <person name="DeShazer D."/>
            <person name="Kim H.S."/>
            <person name="Tettelin H."/>
            <person name="Nelson K.E."/>
            <person name="Feldblyum T.V."/>
            <person name="Ulrich R.L."/>
            <person name="Ronning C.M."/>
            <person name="Brinkac L.M."/>
            <person name="Daugherty S.C."/>
            <person name="Davidsen T.D."/>
            <person name="DeBoy R.T."/>
            <person name="Dimitrov G."/>
            <person name="Dodson R.J."/>
            <person name="Durkin A.S."/>
            <person name="Gwinn M.L."/>
            <person name="Haft D.H."/>
            <person name="Khouri H.M."/>
            <person name="Kolonay J.F."/>
            <person name="Madupu R."/>
            <person name="Mohammoud Y."/>
            <person name="Nelson W.C."/>
            <person name="Radune D."/>
            <person name="Romero C.M."/>
            <person name="Sarria S."/>
            <person name="Selengut J."/>
            <person name="Shamblin C."/>
            <person name="Sullivan S.A."/>
            <person name="White O."/>
            <person name="Yu Y."/>
            <person name="Zafar N."/>
            <person name="Zhou L."/>
            <person name="Fraser C.M."/>
        </authorList>
    </citation>
    <scope>NUCLEOTIDE SEQUENCE [LARGE SCALE GENOMIC DNA]</scope>
    <source>
        <strain>ATCC 23344</strain>
    </source>
</reference>